<sequence length="188" mass="21169">MKTTKSFIIIWTFIGFLLNLLALFTPFELPLFDIADKTNTTYLRMGISFQVASNLFISCVSGATPAKYAQILYLIIGIFGEPLYMTGNSYDMTQDPSWGYVIGSFGASERAGEKAFEKKLSLLNILISSYSGLFVIHAYGAIGLLLHSKSWEHWKSYLIMYSLIPLPSQLVMIFLTSILAFLFRKILD</sequence>
<keyword id="KW-0194">Cyanelle</keyword>
<keyword id="KW-0934">Plastid</keyword>
<reference key="1">
    <citation type="journal article" date="1995" name="Plant Mol. Biol. Rep.">
        <title>Nucleotide sequence of the cyanelle DNA from Cyanophora paradoxa.</title>
        <authorList>
            <person name="Stirewalt V.L."/>
            <person name="Michalowski C.B."/>
            <person name="Loeffelhardt W."/>
            <person name="Bohnert H.J."/>
            <person name="Bryant D.A."/>
        </authorList>
    </citation>
    <scope>NUCLEOTIDE SEQUENCE [LARGE SCALE GENOMIC DNA]</scope>
    <source>
        <strain>UTEX LB 555 / Pringsheim</strain>
    </source>
</reference>
<reference key="2">
    <citation type="book" date="1997" name="Eukaryotism and symbiosis">
        <title>The complete sequence of the cyanelle genome of Cyanophora paradoxa: the genetic complexity of a primitive plastid.</title>
        <editorList>
            <person name="Schenk H.E.A."/>
            <person name="Herrmann R."/>
            <person name="Jeon K.W."/>
            <person name="Mueller N.E."/>
            <person name="Schwemmler W."/>
        </editorList>
        <authorList>
            <person name="Loeffelhardt W."/>
            <person name="Stirewalt V.L."/>
            <person name="Michalowski C.B."/>
            <person name="Annarella M."/>
            <person name="Farley J.Y."/>
            <person name="Schluchter W.M."/>
            <person name="Chung S."/>
            <person name="Newmann-Spallart C."/>
            <person name="Steiner J.M."/>
            <person name="Jakowitsch J."/>
            <person name="Bohnert H.J."/>
            <person name="Bryant D.A."/>
        </authorList>
    </citation>
    <scope>NUCLEOTIDE SEQUENCE [LARGE SCALE GENOMIC DNA]</scope>
    <source>
        <strain>UTEX LB 555 / Pringsheim</strain>
    </source>
</reference>
<dbReference type="EMBL" id="U30821">
    <property type="protein sequence ID" value="AAA81284.1"/>
    <property type="molecule type" value="Genomic_DNA"/>
</dbReference>
<dbReference type="PIR" id="T06941">
    <property type="entry name" value="T06941"/>
</dbReference>
<dbReference type="RefSeq" id="NP_043253.1">
    <property type="nucleotide sequence ID" value="NC_001675.1"/>
</dbReference>
<dbReference type="SMR" id="P48331"/>
<dbReference type="GeneID" id="801610"/>
<dbReference type="GO" id="GO:0009842">
    <property type="term" value="C:cyanelle"/>
    <property type="evidence" value="ECO:0007669"/>
    <property type="project" value="UniProtKB-SubCell"/>
</dbReference>
<dbReference type="GO" id="GO:0005886">
    <property type="term" value="C:plasma membrane"/>
    <property type="evidence" value="ECO:0007669"/>
    <property type="project" value="InterPro"/>
</dbReference>
<dbReference type="GO" id="GO:0015225">
    <property type="term" value="F:biotin transmembrane transporter activity"/>
    <property type="evidence" value="ECO:0007669"/>
    <property type="project" value="InterPro"/>
</dbReference>
<dbReference type="Gene3D" id="1.10.1760.20">
    <property type="match status" value="1"/>
</dbReference>
<dbReference type="InterPro" id="IPR003784">
    <property type="entry name" value="BioY"/>
</dbReference>
<dbReference type="PANTHER" id="PTHR34295">
    <property type="entry name" value="BIOTIN TRANSPORTER BIOY"/>
    <property type="match status" value="1"/>
</dbReference>
<dbReference type="PANTHER" id="PTHR34295:SF1">
    <property type="entry name" value="BIOTIN TRANSPORTER BIOY"/>
    <property type="match status" value="1"/>
</dbReference>
<dbReference type="Pfam" id="PF02632">
    <property type="entry name" value="BioY"/>
    <property type="match status" value="1"/>
</dbReference>
<dbReference type="PIRSF" id="PIRSF016661">
    <property type="entry name" value="BioY"/>
    <property type="match status" value="1"/>
</dbReference>
<comment type="subcellular location">
    <subcellularLocation>
        <location>Plastid</location>
        <location>Cyanelle</location>
    </subcellularLocation>
</comment>
<feature type="chain" id="PRO_0000217431" description="Uncharacterized 21.2 kDa protein in psbX-ycf33 intergenic region">
    <location>
        <begin position="1"/>
        <end position="188"/>
    </location>
</feature>
<geneLocation type="cyanelle"/>
<proteinExistence type="predicted"/>
<accession>P48331</accession>
<protein>
    <recommendedName>
        <fullName>Uncharacterized 21.2 kDa protein in psbX-ycf33 intergenic region</fullName>
    </recommendedName>
    <alternativeName>
        <fullName>ORF188</fullName>
    </alternativeName>
</protein>
<organism>
    <name type="scientific">Cyanophora paradoxa</name>
    <dbReference type="NCBI Taxonomy" id="2762"/>
    <lineage>
        <taxon>Eukaryota</taxon>
        <taxon>Glaucocystophyceae</taxon>
        <taxon>Cyanophoraceae</taxon>
        <taxon>Cyanophora</taxon>
    </lineage>
</organism>
<name>YCXA_CYAPA</name>